<comment type="function">
    <text evidence="5">Cholesterol transporter that mediates non-vesicular transport of cholesterol from the plasma membrane (PM) to the endoplasmic reticulum (ER) (PubMed:30220461). Contains unique domains for binding cholesterol and the PM, thereby serving as a molecular bridge for the transfer of cholesterol from the PM to the ER (PubMed:30220461). Plays a crucial role in cholesterol homeostasis in the adrenal gland and has the unique ability to localize to the PM based on the level of membrane cholesterol (PubMed:30220461). In lipid-poor conditions localizes to the ER membrane and in response to excess cholesterol in the PM is recruited to the endoplasmic reticulum-plasma membrane contact sites (EPCS) which is mediated by the GRAM domain (PubMed:30220461). At the EPCS, the sterol-binding VASt/ASTER domain binds to the cholesterol in the PM and facilitates its transfer from the PM to ER (PubMed:30220461).</text>
</comment>
<comment type="subcellular location">
    <subcellularLocation>
        <location evidence="5">Endoplasmic reticulum membrane</location>
        <topology evidence="2">Single-pass membrane protein</topology>
    </subcellularLocation>
    <subcellularLocation>
        <location evidence="5">Cell membrane</location>
        <topology evidence="2">Single-pass membrane protein</topology>
    </subcellularLocation>
    <text evidence="5">In lipid-poor conditions localizes to the ER membrane and in response to excess cholesterol in the PM is recruited to the endoplasmic reticulum-plasma membrane contact sites (EPCS).</text>
</comment>
<comment type="alternative products">
    <event type="alternative splicing"/>
    <isoform>
        <id>Q80TI0-1</id>
        <name>1</name>
        <sequence type="displayed"/>
    </isoform>
    <isoform>
        <id>Q80TI0-2</id>
        <name>2</name>
        <sequence type="described" ref="VSP_025473"/>
    </isoform>
    <isoform>
        <id>Q80TI0-3</id>
        <name>3</name>
        <sequence type="described" ref="VSP_025474"/>
    </isoform>
    <isoform>
        <id>Q80TI0-4</id>
        <name>4</name>
        <sequence type="described" ref="VSP_025475 VSP_025476"/>
    </isoform>
</comment>
<comment type="tissue specificity">
    <text evidence="5">Highly expressed in the adrenal gland (at protein level) and brain. Also found in the kidney, testis and macrophages.</text>
</comment>
<comment type="induction">
    <text evidence="5">By NR1H2/LXRB and NR1H3/LXRA.</text>
</comment>
<comment type="domain">
    <text evidence="5">GRAM domain binds phosphatidylserine in the PM and mediates protein recruitment to endoplasmic reticulum-plasma membrane contact sites (EPCS) in response to excess cholesterol in the PM.</text>
</comment>
<comment type="domain">
    <text evidence="5">VASt (VAD1 Analog of StAR-related lipid transfer) domain, also known as ASTER (Greek for star) domain is a sterol-binding domain.</text>
</comment>
<comment type="disruption phenotype">
    <text evidence="5">Mice exhibit deficiency in adrenal cholesterol ester storage and steroidogenesis.</text>
</comment>
<comment type="sequence caution" evidence="9">
    <conflict type="erroneous initiation">
        <sequence resource="EMBL-CDS" id="BAC65747"/>
    </conflict>
</comment>
<keyword id="KW-0025">Alternative splicing</keyword>
<keyword id="KW-1003">Cell membrane</keyword>
<keyword id="KW-0256">Endoplasmic reticulum</keyword>
<keyword id="KW-0445">Lipid transport</keyword>
<keyword id="KW-0446">Lipid-binding</keyword>
<keyword id="KW-0472">Membrane</keyword>
<keyword id="KW-0597">Phosphoprotein</keyword>
<keyword id="KW-1185">Reference proteome</keyword>
<keyword id="KW-0812">Transmembrane</keyword>
<keyword id="KW-1133">Transmembrane helix</keyword>
<keyword id="KW-0813">Transport</keyword>
<sequence length="738" mass="85355">MKGFKLSCTASNSNRSTPACSPILRKRSRSPTPQNQDGDTMVEKGSDHSSDKSPSTPEQGVQRSCSSQSGRSGGKNSKKSQSWYNVLSPTYKQRNEDFRKLFKQLPDTERLIVDYSCALQRDILLQGRLYLSENWICFYSNIFRWETLLTVRLKDICSMTKEKTARLIPNAIQVCTDSEKHFFTSFGARDRTYMMMFRLWQNALLEKPLCPKELWHFVHQCYGNELGLTSDDEDYVPPDDDFNTMGYCEEIPIEENEVNDSSSKSSIETKPDASPQLPKKSITNSTLTSTGSSEAPVSFDGLPLEEEVMEGDGSLEKELAIDNIIGEKIEIMAPVTSPSLDFNDNEDIPTELSDSSDTHDEGEVQAFYEDLSGRQYVNEVFNFSVDKLYDLLFTNSPFLRDFMEQRRFSDIIFHPWKKEENGNQSRVILYTITLTNPLAPKTATVRETQTMYKASQESECYVIDAEVLTHDVPYHDYFYTINRYTLTRVARNKSRLRVSTELRYRKQPWGFVKTFIEKNFWSGLEDYFRHLETELTKTESTYLAEIHRQSPKEKASKSSAVRRRKRPHAHLRVPHLEEVMSPVTTPTDEDVGHRIKHVAGSTQTRHIPEDTPDGFHLQSVSKLLLVISCVICFSLVLLVVLNMMLFYKLWMLEYTTQTLTAWQGLRLQERLPQSQTEWAQLLESQQKYHDTELQKWREIIKSSVLLLDQMKDSLINLQNGIRSRDYTAESDEKRNRYH</sequence>
<proteinExistence type="evidence at protein level"/>
<protein>
    <recommendedName>
        <fullName evidence="8">Protein Aster-B</fullName>
    </recommendedName>
    <alternativeName>
        <fullName>GRAM domain-containing protein 1B</fullName>
    </alternativeName>
</protein>
<organism>
    <name type="scientific">Mus musculus</name>
    <name type="common">Mouse</name>
    <dbReference type="NCBI Taxonomy" id="10090"/>
    <lineage>
        <taxon>Eukaryota</taxon>
        <taxon>Metazoa</taxon>
        <taxon>Chordata</taxon>
        <taxon>Craniata</taxon>
        <taxon>Vertebrata</taxon>
        <taxon>Euteleostomi</taxon>
        <taxon>Mammalia</taxon>
        <taxon>Eutheria</taxon>
        <taxon>Euarchontoglires</taxon>
        <taxon>Glires</taxon>
        <taxon>Rodentia</taxon>
        <taxon>Myomorpha</taxon>
        <taxon>Muroidea</taxon>
        <taxon>Muridae</taxon>
        <taxon>Murinae</taxon>
        <taxon>Mus</taxon>
        <taxon>Mus</taxon>
    </lineage>
</organism>
<accession>Q80TI0</accession>
<accession>Q6NS56</accession>
<accession>Q8BZZ1</accession>
<accession>Q9CTQ2</accession>
<feature type="chain" id="PRO_0000287450" description="Protein Aster-B">
    <location>
        <begin position="1"/>
        <end position="738"/>
    </location>
</feature>
<feature type="transmembrane region" description="Helical" evidence="2">
    <location>
        <begin position="623"/>
        <end position="643"/>
    </location>
</feature>
<feature type="domain" description="GRAM" evidence="2">
    <location>
        <begin position="96"/>
        <end position="163"/>
    </location>
</feature>
<feature type="domain" description="VASt" evidence="3">
    <location>
        <begin position="372"/>
        <end position="543"/>
    </location>
</feature>
<feature type="region of interest" description="Disordered" evidence="4">
    <location>
        <begin position="1"/>
        <end position="81"/>
    </location>
</feature>
<feature type="region of interest" description="Disordered" evidence="4">
    <location>
        <begin position="254"/>
        <end position="299"/>
    </location>
</feature>
<feature type="compositionally biased region" description="Polar residues" evidence="4">
    <location>
        <begin position="8"/>
        <end position="19"/>
    </location>
</feature>
<feature type="compositionally biased region" description="Basic and acidic residues" evidence="4">
    <location>
        <begin position="41"/>
        <end position="51"/>
    </location>
</feature>
<feature type="compositionally biased region" description="Low complexity" evidence="4">
    <location>
        <begin position="59"/>
        <end position="70"/>
    </location>
</feature>
<feature type="compositionally biased region" description="Polar residues" evidence="4">
    <location>
        <begin position="259"/>
        <end position="268"/>
    </location>
</feature>
<feature type="compositionally biased region" description="Polar residues" evidence="4">
    <location>
        <begin position="281"/>
        <end position="295"/>
    </location>
</feature>
<feature type="modified residue" description="Phosphoserine" evidence="10">
    <location>
        <position position="28"/>
    </location>
</feature>
<feature type="modified residue" description="Phosphoserine" evidence="10">
    <location>
        <position position="30"/>
    </location>
</feature>
<feature type="modified residue" description="Phosphoserine" evidence="10">
    <location>
        <position position="274"/>
    </location>
</feature>
<feature type="modified residue" description="Phosphotyrosine" evidence="1">
    <location>
        <position position="389"/>
    </location>
</feature>
<feature type="modified residue" description="Phosphoserine" evidence="1">
    <location>
        <position position="550"/>
    </location>
</feature>
<feature type="modified residue" description="Phosphoserine" evidence="1">
    <location>
        <position position="581"/>
    </location>
</feature>
<feature type="modified residue" description="Phosphothreonine" evidence="10">
    <location>
        <position position="584"/>
    </location>
</feature>
<feature type="modified residue" description="Phosphothreonine" evidence="10">
    <location>
        <position position="585"/>
    </location>
</feature>
<feature type="modified residue" description="Phosphothreonine" evidence="10">
    <location>
        <position position="587"/>
    </location>
</feature>
<feature type="splice variant" id="VSP_025473" description="In isoform 2." evidence="7">
    <location>
        <begin position="1"/>
        <end position="40"/>
    </location>
</feature>
<feature type="splice variant" id="VSP_025474" description="In isoform 3." evidence="6">
    <original>MKGFKLSC</original>
    <variation>MASS</variation>
    <location>
        <begin position="1"/>
        <end position="8"/>
    </location>
</feature>
<feature type="splice variant" id="VSP_025475" description="In isoform 4." evidence="7">
    <original>MKGFKLSC</original>
    <variation>MPAANMMENLQLPALQVPEPQGAPEGSAVWSSSSTPTLRRRRFKMRRMKNVQEQSLEAGLVAPDLPGVLAPGKEFLQLPSIEITPSSDEDTPWSNCSTPSASPRRKRFLLRKWLRVRERKECSESSSQQSSQQSSHDDDSSRFLSPRVRDES</variation>
    <location>
        <begin position="1"/>
        <end position="8"/>
    </location>
</feature>
<feature type="splice variant" id="VSP_025476" description="In isoform 4." evidence="7">
    <location>
        <begin position="631"/>
        <end position="634"/>
    </location>
</feature>
<gene>
    <name type="primary">Gramd1b</name>
    <name type="synonym">Kiaa1201</name>
</gene>
<evidence type="ECO:0000250" key="1">
    <source>
        <dbReference type="UniProtKB" id="Q3KR37"/>
    </source>
</evidence>
<evidence type="ECO:0000255" key="2"/>
<evidence type="ECO:0000255" key="3">
    <source>
        <dbReference type="PROSITE-ProRule" id="PRU01114"/>
    </source>
</evidence>
<evidence type="ECO:0000256" key="4">
    <source>
        <dbReference type="SAM" id="MobiDB-lite"/>
    </source>
</evidence>
<evidence type="ECO:0000269" key="5">
    <source>
    </source>
</evidence>
<evidence type="ECO:0000303" key="6">
    <source>
    </source>
</evidence>
<evidence type="ECO:0000303" key="7">
    <source>
    </source>
</evidence>
<evidence type="ECO:0000303" key="8">
    <source>
    </source>
</evidence>
<evidence type="ECO:0000305" key="9"/>
<evidence type="ECO:0007744" key="10">
    <source>
    </source>
</evidence>
<reference key="1">
    <citation type="journal article" date="2003" name="DNA Res.">
        <title>Prediction of the coding sequences of mouse homologues of KIAA gene: II. The complete nucleotide sequences of 400 mouse KIAA-homologous cDNAs identified by screening of terminal sequences of cDNA clones randomly sampled from size-fractionated libraries.</title>
        <authorList>
            <person name="Okazaki N."/>
            <person name="Kikuno R."/>
            <person name="Ohara R."/>
            <person name="Inamoto S."/>
            <person name="Aizawa H."/>
            <person name="Yuasa S."/>
            <person name="Nakajima D."/>
            <person name="Nagase T."/>
            <person name="Ohara O."/>
            <person name="Koga H."/>
        </authorList>
    </citation>
    <scope>NUCLEOTIDE SEQUENCE [LARGE SCALE MRNA] (ISOFORM 1)</scope>
    <source>
        <tissue>Brain</tissue>
    </source>
</reference>
<reference key="2">
    <citation type="journal article" date="2005" name="Science">
        <title>The transcriptional landscape of the mammalian genome.</title>
        <authorList>
            <person name="Carninci P."/>
            <person name="Kasukawa T."/>
            <person name="Katayama S."/>
            <person name="Gough J."/>
            <person name="Frith M.C."/>
            <person name="Maeda N."/>
            <person name="Oyama R."/>
            <person name="Ravasi T."/>
            <person name="Lenhard B."/>
            <person name="Wells C."/>
            <person name="Kodzius R."/>
            <person name="Shimokawa K."/>
            <person name="Bajic V.B."/>
            <person name="Brenner S.E."/>
            <person name="Batalov S."/>
            <person name="Forrest A.R."/>
            <person name="Zavolan M."/>
            <person name="Davis M.J."/>
            <person name="Wilming L.G."/>
            <person name="Aidinis V."/>
            <person name="Allen J.E."/>
            <person name="Ambesi-Impiombato A."/>
            <person name="Apweiler R."/>
            <person name="Aturaliya R.N."/>
            <person name="Bailey T.L."/>
            <person name="Bansal M."/>
            <person name="Baxter L."/>
            <person name="Beisel K.W."/>
            <person name="Bersano T."/>
            <person name="Bono H."/>
            <person name="Chalk A.M."/>
            <person name="Chiu K.P."/>
            <person name="Choudhary V."/>
            <person name="Christoffels A."/>
            <person name="Clutterbuck D.R."/>
            <person name="Crowe M.L."/>
            <person name="Dalla E."/>
            <person name="Dalrymple B.P."/>
            <person name="de Bono B."/>
            <person name="Della Gatta G."/>
            <person name="di Bernardo D."/>
            <person name="Down T."/>
            <person name="Engstrom P."/>
            <person name="Fagiolini M."/>
            <person name="Faulkner G."/>
            <person name="Fletcher C.F."/>
            <person name="Fukushima T."/>
            <person name="Furuno M."/>
            <person name="Futaki S."/>
            <person name="Gariboldi M."/>
            <person name="Georgii-Hemming P."/>
            <person name="Gingeras T.R."/>
            <person name="Gojobori T."/>
            <person name="Green R.E."/>
            <person name="Gustincich S."/>
            <person name="Harbers M."/>
            <person name="Hayashi Y."/>
            <person name="Hensch T.K."/>
            <person name="Hirokawa N."/>
            <person name="Hill D."/>
            <person name="Huminiecki L."/>
            <person name="Iacono M."/>
            <person name="Ikeo K."/>
            <person name="Iwama A."/>
            <person name="Ishikawa T."/>
            <person name="Jakt M."/>
            <person name="Kanapin A."/>
            <person name="Katoh M."/>
            <person name="Kawasawa Y."/>
            <person name="Kelso J."/>
            <person name="Kitamura H."/>
            <person name="Kitano H."/>
            <person name="Kollias G."/>
            <person name="Krishnan S.P."/>
            <person name="Kruger A."/>
            <person name="Kummerfeld S.K."/>
            <person name="Kurochkin I.V."/>
            <person name="Lareau L.F."/>
            <person name="Lazarevic D."/>
            <person name="Lipovich L."/>
            <person name="Liu J."/>
            <person name="Liuni S."/>
            <person name="McWilliam S."/>
            <person name="Madan Babu M."/>
            <person name="Madera M."/>
            <person name="Marchionni L."/>
            <person name="Matsuda H."/>
            <person name="Matsuzawa S."/>
            <person name="Miki H."/>
            <person name="Mignone F."/>
            <person name="Miyake S."/>
            <person name="Morris K."/>
            <person name="Mottagui-Tabar S."/>
            <person name="Mulder N."/>
            <person name="Nakano N."/>
            <person name="Nakauchi H."/>
            <person name="Ng P."/>
            <person name="Nilsson R."/>
            <person name="Nishiguchi S."/>
            <person name="Nishikawa S."/>
            <person name="Nori F."/>
            <person name="Ohara O."/>
            <person name="Okazaki Y."/>
            <person name="Orlando V."/>
            <person name="Pang K.C."/>
            <person name="Pavan W.J."/>
            <person name="Pavesi G."/>
            <person name="Pesole G."/>
            <person name="Petrovsky N."/>
            <person name="Piazza S."/>
            <person name="Reed J."/>
            <person name="Reid J.F."/>
            <person name="Ring B.Z."/>
            <person name="Ringwald M."/>
            <person name="Rost B."/>
            <person name="Ruan Y."/>
            <person name="Salzberg S.L."/>
            <person name="Sandelin A."/>
            <person name="Schneider C."/>
            <person name="Schoenbach C."/>
            <person name="Sekiguchi K."/>
            <person name="Semple C.A."/>
            <person name="Seno S."/>
            <person name="Sessa L."/>
            <person name="Sheng Y."/>
            <person name="Shibata Y."/>
            <person name="Shimada H."/>
            <person name="Shimada K."/>
            <person name="Silva D."/>
            <person name="Sinclair B."/>
            <person name="Sperling S."/>
            <person name="Stupka E."/>
            <person name="Sugiura K."/>
            <person name="Sultana R."/>
            <person name="Takenaka Y."/>
            <person name="Taki K."/>
            <person name="Tammoja K."/>
            <person name="Tan S.L."/>
            <person name="Tang S."/>
            <person name="Taylor M.S."/>
            <person name="Tegner J."/>
            <person name="Teichmann S.A."/>
            <person name="Ueda H.R."/>
            <person name="van Nimwegen E."/>
            <person name="Verardo R."/>
            <person name="Wei C.L."/>
            <person name="Yagi K."/>
            <person name="Yamanishi H."/>
            <person name="Zabarovsky E."/>
            <person name="Zhu S."/>
            <person name="Zimmer A."/>
            <person name="Hide W."/>
            <person name="Bult C."/>
            <person name="Grimmond S.M."/>
            <person name="Teasdale R.D."/>
            <person name="Liu E.T."/>
            <person name="Brusic V."/>
            <person name="Quackenbush J."/>
            <person name="Wahlestedt C."/>
            <person name="Mattick J.S."/>
            <person name="Hume D.A."/>
            <person name="Kai C."/>
            <person name="Sasaki D."/>
            <person name="Tomaru Y."/>
            <person name="Fukuda S."/>
            <person name="Kanamori-Katayama M."/>
            <person name="Suzuki M."/>
            <person name="Aoki J."/>
            <person name="Arakawa T."/>
            <person name="Iida J."/>
            <person name="Imamura K."/>
            <person name="Itoh M."/>
            <person name="Kato T."/>
            <person name="Kawaji H."/>
            <person name="Kawagashira N."/>
            <person name="Kawashima T."/>
            <person name="Kojima M."/>
            <person name="Kondo S."/>
            <person name="Konno H."/>
            <person name="Nakano K."/>
            <person name="Ninomiya N."/>
            <person name="Nishio T."/>
            <person name="Okada M."/>
            <person name="Plessy C."/>
            <person name="Shibata K."/>
            <person name="Shiraki T."/>
            <person name="Suzuki S."/>
            <person name="Tagami M."/>
            <person name="Waki K."/>
            <person name="Watahiki A."/>
            <person name="Okamura-Oho Y."/>
            <person name="Suzuki H."/>
            <person name="Kawai J."/>
            <person name="Hayashizaki Y."/>
        </authorList>
    </citation>
    <scope>NUCLEOTIDE SEQUENCE [LARGE SCALE MRNA] (ISOFORM 4)</scope>
    <scope>NUCLEOTIDE SEQUENCE [LARGE SCALE MRNA] OF 1-158 (ISOFORM 2)</scope>
    <source>
        <strain>C57BL/6J</strain>
        <tissue>Retina</tissue>
        <tissue>Testis</tissue>
    </source>
</reference>
<reference key="3">
    <citation type="journal article" date="2004" name="Genome Res.">
        <title>The status, quality, and expansion of the NIH full-length cDNA project: the Mammalian Gene Collection (MGC).</title>
        <authorList>
            <consortium name="The MGC Project Team"/>
        </authorList>
    </citation>
    <scope>NUCLEOTIDE SEQUENCE [LARGE SCALE MRNA] (ISOFORM 3)</scope>
    <source>
        <strain>C57BL/6J</strain>
        <tissue>Brain</tissue>
    </source>
</reference>
<reference key="4">
    <citation type="journal article" date="2010" name="Cell">
        <title>A tissue-specific atlas of mouse protein phosphorylation and expression.</title>
        <authorList>
            <person name="Huttlin E.L."/>
            <person name="Jedrychowski M.P."/>
            <person name="Elias J.E."/>
            <person name="Goswami T."/>
            <person name="Rad R."/>
            <person name="Beausoleil S.A."/>
            <person name="Villen J."/>
            <person name="Haas W."/>
            <person name="Sowa M.E."/>
            <person name="Gygi S.P."/>
        </authorList>
    </citation>
    <scope>PHOSPHORYLATION [LARGE SCALE ANALYSIS] AT SER-28; SER-30; SER-274; THR-584; THR-585 AND THR-587</scope>
    <scope>IDENTIFICATION BY MASS SPECTROMETRY [LARGE SCALE ANALYSIS]</scope>
    <source>
        <tissue>Brain</tissue>
        <tissue>Kidney</tissue>
        <tissue>Testis</tissue>
    </source>
</reference>
<reference key="5">
    <citation type="journal article" date="2018" name="Cell">
        <title>Aster proteins facilitate nonvesicular plasma membrane to ER cholesterol transport in mammalian cells.</title>
        <authorList>
            <person name="Sandhu J."/>
            <person name="Li S."/>
            <person name="Fairall L."/>
            <person name="Pfisterer S.G."/>
            <person name="Gurnett J.E."/>
            <person name="Xiao X."/>
            <person name="Weston T.A."/>
            <person name="Vashi D."/>
            <person name="Ferrari A."/>
            <person name="Orozco J.L."/>
            <person name="Hartman C.L."/>
            <person name="Strugatsky D."/>
            <person name="Lee S.D."/>
            <person name="He C."/>
            <person name="Hong C."/>
            <person name="Jiang H."/>
            <person name="Bentolila L.A."/>
            <person name="Gatta A.T."/>
            <person name="Levine T.P."/>
            <person name="Ferng A."/>
            <person name="Lee R."/>
            <person name="Ford D.A."/>
            <person name="Young S.G."/>
            <person name="Ikonen E."/>
            <person name="Schwabe J.W.R."/>
            <person name="Tontonoz P."/>
        </authorList>
    </citation>
    <scope>FUNCTION</scope>
    <scope>SUBCELLULAR LOCATION</scope>
    <scope>TISSUE SPECIFICITY</scope>
    <scope>DISRUPTION PHENOTYPE</scope>
    <scope>INDUCTION</scope>
    <scope>DOMAINS GRAM AND VAST/ASTER</scope>
    <scope>GENE STRUCTURE</scope>
</reference>
<dbReference type="EMBL" id="AK122465">
    <property type="protein sequence ID" value="BAC65747.1"/>
    <property type="status" value="ALT_INIT"/>
    <property type="molecule type" value="mRNA"/>
</dbReference>
<dbReference type="EMBL" id="AK020827">
    <property type="protein sequence ID" value="BAB32220.1"/>
    <property type="molecule type" value="mRNA"/>
</dbReference>
<dbReference type="EMBL" id="AK033156">
    <property type="protein sequence ID" value="BAC28174.1"/>
    <property type="molecule type" value="mRNA"/>
</dbReference>
<dbReference type="EMBL" id="BC070451">
    <property type="protein sequence ID" value="AAH70451.1"/>
    <property type="molecule type" value="mRNA"/>
</dbReference>
<dbReference type="CCDS" id="CCDS23081.1">
    <molecule id="Q80TI0-4"/>
</dbReference>
<dbReference type="RefSeq" id="NP_001344549.1">
    <molecule id="Q80TI0-1"/>
    <property type="nucleotide sequence ID" value="NM_001357620.1"/>
</dbReference>
<dbReference type="RefSeq" id="NP_766356.1">
    <molecule id="Q80TI0-4"/>
    <property type="nucleotide sequence ID" value="NM_172768.2"/>
</dbReference>
<dbReference type="RefSeq" id="XP_006510310.1">
    <property type="nucleotide sequence ID" value="XM_006510247.3"/>
</dbReference>
<dbReference type="RefSeq" id="XP_006510314.1">
    <property type="nucleotide sequence ID" value="XM_006510251.3"/>
</dbReference>
<dbReference type="RefSeq" id="XP_006510315.1">
    <molecule id="Q80TI0-2"/>
    <property type="nucleotide sequence ID" value="XM_006510252.5"/>
</dbReference>
<dbReference type="RefSeq" id="XP_030100159.1">
    <molecule id="Q80TI0-4"/>
    <property type="nucleotide sequence ID" value="XM_030244299.1"/>
</dbReference>
<dbReference type="RefSeq" id="XP_030100169.1">
    <molecule id="Q80TI0-2"/>
    <property type="nucleotide sequence ID" value="XM_030244309.2"/>
</dbReference>
<dbReference type="RefSeq" id="XP_030100171.1">
    <molecule id="Q80TI0-2"/>
    <property type="nucleotide sequence ID" value="XM_030244311.1"/>
</dbReference>
<dbReference type="RefSeq" id="XP_030100172.1">
    <molecule id="Q80TI0-2"/>
    <property type="nucleotide sequence ID" value="XM_030244312.2"/>
</dbReference>
<dbReference type="RefSeq" id="XP_036010778.1">
    <molecule id="Q80TI0-2"/>
    <property type="nucleotide sequence ID" value="XM_036154885.1"/>
</dbReference>
<dbReference type="SMR" id="Q80TI0"/>
<dbReference type="BioGRID" id="231633">
    <property type="interactions" value="10"/>
</dbReference>
<dbReference type="FunCoup" id="Q80TI0">
    <property type="interactions" value="1024"/>
</dbReference>
<dbReference type="STRING" id="10090.ENSMUSP00000048126"/>
<dbReference type="GlyGen" id="Q80TI0">
    <property type="glycosylation" value="1 site, 1 N-linked glycan (1 site)"/>
</dbReference>
<dbReference type="iPTMnet" id="Q80TI0"/>
<dbReference type="PhosphoSitePlus" id="Q80TI0"/>
<dbReference type="SwissPalm" id="Q80TI0"/>
<dbReference type="jPOST" id="Q80TI0"/>
<dbReference type="PaxDb" id="10090-ENSMUSP00000130050"/>
<dbReference type="PeptideAtlas" id="Q80TI0"/>
<dbReference type="ProteomicsDB" id="271093">
    <molecule id="Q80TI0-1"/>
</dbReference>
<dbReference type="ProteomicsDB" id="271094">
    <molecule id="Q80TI0-2"/>
</dbReference>
<dbReference type="ProteomicsDB" id="271095">
    <molecule id="Q80TI0-3"/>
</dbReference>
<dbReference type="ProteomicsDB" id="271096">
    <molecule id="Q80TI0-4"/>
</dbReference>
<dbReference type="Antibodypedia" id="2247">
    <property type="antibodies" value="60 antibodies from 17 providers"/>
</dbReference>
<dbReference type="DNASU" id="235283"/>
<dbReference type="Ensembl" id="ENSMUST00000045682.7">
    <molecule id="Q80TI0-4"/>
    <property type="protein sequence ID" value="ENSMUSP00000048126.6"/>
    <property type="gene ID" value="ENSMUSG00000040111.18"/>
</dbReference>
<dbReference type="Ensembl" id="ENSMUST00000118159.8">
    <molecule id="Q80TI0-2"/>
    <property type="protein sequence ID" value="ENSMUSP00000112417.2"/>
    <property type="gene ID" value="ENSMUSG00000040111.18"/>
</dbReference>
<dbReference type="Ensembl" id="ENSMUST00000121357.8">
    <molecule id="Q80TI0-3"/>
    <property type="protein sequence ID" value="ENSMUSP00000112564.2"/>
    <property type="gene ID" value="ENSMUSG00000040111.18"/>
</dbReference>
<dbReference type="Ensembl" id="ENSMUST00000165104.8">
    <molecule id="Q80TI0-4"/>
    <property type="protein sequence ID" value="ENSMUSP00000130050.2"/>
    <property type="gene ID" value="ENSMUSG00000040111.18"/>
</dbReference>
<dbReference type="GeneID" id="235283"/>
<dbReference type="KEGG" id="mmu:235283"/>
<dbReference type="UCSC" id="uc009ozn.1">
    <molecule id="Q80TI0-4"/>
    <property type="organism name" value="mouse"/>
</dbReference>
<dbReference type="UCSC" id="uc009ozo.1">
    <molecule id="Q80TI0-3"/>
    <property type="organism name" value="mouse"/>
</dbReference>
<dbReference type="UCSC" id="uc009ozp.1">
    <molecule id="Q80TI0-1"/>
    <property type="organism name" value="mouse"/>
</dbReference>
<dbReference type="AGR" id="MGI:1925037"/>
<dbReference type="CTD" id="57476"/>
<dbReference type="MGI" id="MGI:1925037">
    <property type="gene designation" value="Gramd1b"/>
</dbReference>
<dbReference type="VEuPathDB" id="HostDB:ENSMUSG00000040111"/>
<dbReference type="eggNOG" id="KOG1032">
    <property type="taxonomic scope" value="Eukaryota"/>
</dbReference>
<dbReference type="GeneTree" id="ENSGT00940000156649"/>
<dbReference type="HOGENOM" id="CLU_015189_1_0_1"/>
<dbReference type="InParanoid" id="Q80TI0"/>
<dbReference type="OMA" id="XVSTELR"/>
<dbReference type="OrthoDB" id="2162691at2759"/>
<dbReference type="PhylomeDB" id="Q80TI0"/>
<dbReference type="TreeFam" id="TF327695"/>
<dbReference type="BioGRID-ORCS" id="235283">
    <property type="hits" value="3 hits in 77 CRISPR screens"/>
</dbReference>
<dbReference type="ChiTaRS" id="Gramd1b">
    <property type="organism name" value="mouse"/>
</dbReference>
<dbReference type="PRO" id="PR:Q80TI0"/>
<dbReference type="Proteomes" id="UP000000589">
    <property type="component" value="Chromosome 9"/>
</dbReference>
<dbReference type="RNAct" id="Q80TI0">
    <property type="molecule type" value="protein"/>
</dbReference>
<dbReference type="Bgee" id="ENSMUSG00000040111">
    <property type="expression patterns" value="Expressed in retinal neural layer and 223 other cell types or tissues"/>
</dbReference>
<dbReference type="ExpressionAtlas" id="Q80TI0">
    <property type="expression patterns" value="baseline and differential"/>
</dbReference>
<dbReference type="GO" id="GO:0005789">
    <property type="term" value="C:endoplasmic reticulum membrane"/>
    <property type="evidence" value="ECO:0000314"/>
    <property type="project" value="UniProtKB"/>
</dbReference>
<dbReference type="GO" id="GO:0140268">
    <property type="term" value="C:endoplasmic reticulum-plasma membrane contact site"/>
    <property type="evidence" value="ECO:0000314"/>
    <property type="project" value="UniProtKB"/>
</dbReference>
<dbReference type="GO" id="GO:0005886">
    <property type="term" value="C:plasma membrane"/>
    <property type="evidence" value="ECO:0000314"/>
    <property type="project" value="UniProtKB"/>
</dbReference>
<dbReference type="GO" id="GO:0015485">
    <property type="term" value="F:cholesterol binding"/>
    <property type="evidence" value="ECO:0000314"/>
    <property type="project" value="UniProtKB"/>
</dbReference>
<dbReference type="GO" id="GO:0120020">
    <property type="term" value="F:cholesterol transfer activity"/>
    <property type="evidence" value="ECO:0000315"/>
    <property type="project" value="UniProtKB"/>
</dbReference>
<dbReference type="GO" id="GO:0070300">
    <property type="term" value="F:phosphatidic acid binding"/>
    <property type="evidence" value="ECO:0000314"/>
    <property type="project" value="UniProtKB"/>
</dbReference>
<dbReference type="GO" id="GO:0001786">
    <property type="term" value="F:phosphatidylserine binding"/>
    <property type="evidence" value="ECO:0000314"/>
    <property type="project" value="UniProtKB"/>
</dbReference>
<dbReference type="GO" id="GO:0071397">
    <property type="term" value="P:cellular response to cholesterol"/>
    <property type="evidence" value="ECO:0000314"/>
    <property type="project" value="UniProtKB"/>
</dbReference>
<dbReference type="GO" id="GO:0042632">
    <property type="term" value="P:cholesterol homeostasis"/>
    <property type="evidence" value="ECO:0000315"/>
    <property type="project" value="UniProtKB"/>
</dbReference>
<dbReference type="CDD" id="cd13220">
    <property type="entry name" value="PH-GRAM_GRAMDC"/>
    <property type="match status" value="1"/>
</dbReference>
<dbReference type="FunFam" id="2.30.29.30:FF:000008">
    <property type="entry name" value="GRAM domain containing 1B"/>
    <property type="match status" value="1"/>
</dbReference>
<dbReference type="Gene3D" id="2.30.29.30">
    <property type="entry name" value="Pleckstrin-homology domain (PH domain)/Phosphotyrosine-binding domain (PTB)"/>
    <property type="match status" value="1"/>
</dbReference>
<dbReference type="InterPro" id="IPR051482">
    <property type="entry name" value="Cholesterol_transport"/>
</dbReference>
<dbReference type="InterPro" id="IPR004182">
    <property type="entry name" value="GRAM"/>
</dbReference>
<dbReference type="InterPro" id="IPR011993">
    <property type="entry name" value="PH-like_dom_sf"/>
</dbReference>
<dbReference type="InterPro" id="IPR031968">
    <property type="entry name" value="VASt"/>
</dbReference>
<dbReference type="PANTHER" id="PTHR23319">
    <property type="entry name" value="GRAM DOMAIN CONTAINING 1B, ISOFORM E"/>
    <property type="match status" value="1"/>
</dbReference>
<dbReference type="PANTHER" id="PTHR23319:SF3">
    <property type="entry name" value="PROTEIN ASTER-B"/>
    <property type="match status" value="1"/>
</dbReference>
<dbReference type="Pfam" id="PF02893">
    <property type="entry name" value="GRAM"/>
    <property type="match status" value="1"/>
</dbReference>
<dbReference type="Pfam" id="PF16016">
    <property type="entry name" value="VASt"/>
    <property type="match status" value="1"/>
</dbReference>
<dbReference type="SMART" id="SM00568">
    <property type="entry name" value="GRAM"/>
    <property type="match status" value="1"/>
</dbReference>
<dbReference type="PROSITE" id="PS51778">
    <property type="entry name" value="VAST"/>
    <property type="match status" value="1"/>
</dbReference>
<name>ASTRB_MOUSE</name>